<organism>
    <name type="scientific">Oryctolagus cuniculus</name>
    <name type="common">Rabbit</name>
    <dbReference type="NCBI Taxonomy" id="9986"/>
    <lineage>
        <taxon>Eukaryota</taxon>
        <taxon>Metazoa</taxon>
        <taxon>Chordata</taxon>
        <taxon>Craniata</taxon>
        <taxon>Vertebrata</taxon>
        <taxon>Euteleostomi</taxon>
        <taxon>Mammalia</taxon>
        <taxon>Eutheria</taxon>
        <taxon>Euarchontoglires</taxon>
        <taxon>Glires</taxon>
        <taxon>Lagomorpha</taxon>
        <taxon>Leporidae</taxon>
        <taxon>Oryctolagus</taxon>
    </lineage>
</organism>
<comment type="function">
    <text evidence="9">Plays a key role in glycolysis and gluconeogenesis. In addition, may also function as scaffolding protein.</text>
</comment>
<comment type="catalytic activity">
    <reaction evidence="12 13">
        <text>beta-D-fructose 1,6-bisphosphate = D-glyceraldehyde 3-phosphate + dihydroxyacetone phosphate</text>
        <dbReference type="Rhea" id="RHEA:14729"/>
        <dbReference type="ChEBI" id="CHEBI:32966"/>
        <dbReference type="ChEBI" id="CHEBI:57642"/>
        <dbReference type="ChEBI" id="CHEBI:59776"/>
        <dbReference type="EC" id="4.1.2.13"/>
    </reaction>
    <physiologicalReaction direction="left-to-right" evidence="18">
        <dbReference type="Rhea" id="RHEA:14730"/>
    </physiologicalReaction>
</comment>
<comment type="biophysicochemical properties">
    <kinetics>
        <KM evidence="13">14 mM for fructose-l-phosphate</KM>
        <KM evidence="13">28 uM for fructose-l,6-bisphosphate</KM>
    </kinetics>
</comment>
<comment type="pathway">
    <text>Carbohydrate degradation; glycolysis; D-glyceraldehyde 3-phosphate and glycerone phosphate from D-glucose: step 4/4.</text>
</comment>
<comment type="subunit">
    <text evidence="5 8 9 10 11 12 13">Homotetramer (PubMed:10504235, PubMed:18453690, PubMed:20129922, PubMed:2204832). Interacts with SNX9 and WAS. Interacts with FBP2; the interaction blocks FBP2 inhibition by physiological concentrations of AMP and reduces inhibition by Ca(2+).</text>
</comment>
<comment type="subcellular location">
    <subcellularLocation>
        <location evidence="8">Cytoplasm</location>
        <location evidence="8">Myofibril</location>
        <location evidence="8">Sarcomere</location>
        <location evidence="8">I band</location>
    </subcellularLocation>
    <subcellularLocation>
        <location evidence="8">Cytoplasm</location>
        <location evidence="8">Myofibril</location>
        <location evidence="8">Sarcomere</location>
        <location evidence="8">M line</location>
    </subcellularLocation>
    <text>In skeletal muscle, accumulates around the M line and within the I band, colocalizing with FBP2 on both sides of the Z line in the absence of Ca(2+).</text>
</comment>
<comment type="PTM">
    <text>Asn-361 in form alpha is deaminated to Asp in form beta.</text>
</comment>
<comment type="miscellaneous">
    <text>In vertebrates, three forms of this ubiquitous glycolytic enzyme are found, aldolase A in muscle, aldolase B in liver and aldolase C in brain.</text>
</comment>
<comment type="miscellaneous">
    <text>Alkylation of Arg-43 inactivates the enzyme.</text>
</comment>
<comment type="similarity">
    <text evidence="17">Belongs to the class I fructose-bisphosphate aldolase family.</text>
</comment>
<proteinExistence type="evidence at protein level"/>
<evidence type="ECO:0000250" key="1"/>
<evidence type="ECO:0000250" key="2">
    <source>
        <dbReference type="UniProtKB" id="P04075"/>
    </source>
</evidence>
<evidence type="ECO:0000250" key="3">
    <source>
        <dbReference type="UniProtKB" id="P05065"/>
    </source>
</evidence>
<evidence type="ECO:0000250" key="4">
    <source>
        <dbReference type="UniProtKB" id="P09972"/>
    </source>
</evidence>
<evidence type="ECO:0000269" key="5">
    <source>
    </source>
</evidence>
<evidence type="ECO:0000269" key="6">
    <source>
    </source>
</evidence>
<evidence type="ECO:0000269" key="7">
    <source>
    </source>
</evidence>
<evidence type="ECO:0000269" key="8">
    <source>
    </source>
</evidence>
<evidence type="ECO:0000269" key="9">
    <source>
    </source>
</evidence>
<evidence type="ECO:0000269" key="10">
    <source>
    </source>
</evidence>
<evidence type="ECO:0000269" key="11">
    <source>
    </source>
</evidence>
<evidence type="ECO:0000269" key="12">
    <source>
    </source>
</evidence>
<evidence type="ECO:0000269" key="13">
    <source>
    </source>
</evidence>
<evidence type="ECO:0000269" key="14">
    <source>
    </source>
</evidence>
<evidence type="ECO:0000269" key="15">
    <source>
    </source>
</evidence>
<evidence type="ECO:0000303" key="16">
    <source>
    </source>
</evidence>
<evidence type="ECO:0000305" key="17"/>
<evidence type="ECO:0000305" key="18">
    <source>
    </source>
</evidence>
<evidence type="ECO:0007744" key="19">
    <source>
        <dbReference type="PDB" id="6ALD"/>
    </source>
</evidence>
<evidence type="ECO:0007829" key="20">
    <source>
        <dbReference type="PDB" id="1ADO"/>
    </source>
</evidence>
<evidence type="ECO:0007829" key="21">
    <source>
        <dbReference type="PDB" id="1EWE"/>
    </source>
</evidence>
<evidence type="ECO:0007829" key="22">
    <source>
        <dbReference type="PDB" id="1ZAI"/>
    </source>
</evidence>
<evidence type="ECO:0007829" key="23">
    <source>
        <dbReference type="PDB" id="2QUV"/>
    </source>
</evidence>
<evidence type="ECO:0007829" key="24">
    <source>
        <dbReference type="PDB" id="3DFQ"/>
    </source>
</evidence>
<evidence type="ECO:0007829" key="25">
    <source>
        <dbReference type="PDB" id="5TLE"/>
    </source>
</evidence>
<feature type="initiator methionine" description="Removed" evidence="6 14">
    <location>
        <position position="1"/>
    </location>
</feature>
<feature type="chain" id="PRO_0000216938" description="Fructose-bisphosphate aldolase A">
    <location>
        <begin position="2"/>
        <end position="364"/>
    </location>
</feature>
<feature type="active site" description="Proton acceptor" evidence="7">
    <location>
        <position position="188"/>
    </location>
</feature>
<feature type="active site" description="Schiff-base intermediate with dihydroxyacetone-P" evidence="7">
    <location>
        <position position="230"/>
    </location>
</feature>
<feature type="binding site" evidence="5 19">
    <location>
        <position position="43"/>
    </location>
    <ligand>
        <name>beta-D-fructose 1,6-bisphosphate</name>
        <dbReference type="ChEBI" id="CHEBI:32966"/>
    </ligand>
</feature>
<feature type="binding site" evidence="5 19">
    <location>
        <begin position="272"/>
        <end position="274"/>
    </location>
    <ligand>
        <name>beta-D-fructose 1,6-bisphosphate</name>
        <dbReference type="ChEBI" id="CHEBI:32966"/>
    </ligand>
</feature>
<feature type="binding site" evidence="5 19">
    <location>
        <position position="301"/>
    </location>
    <ligand>
        <name>beta-D-fructose 1,6-bisphosphate</name>
        <dbReference type="ChEBI" id="CHEBI:32966"/>
    </ligand>
</feature>
<feature type="binding site" evidence="5 19">
    <location>
        <position position="304"/>
    </location>
    <ligand>
        <name>beta-D-fructose 1,6-bisphosphate</name>
        <dbReference type="ChEBI" id="CHEBI:32966"/>
    </ligand>
</feature>
<feature type="site" description="Essential for substrate cleavage">
    <location>
        <position position="73"/>
    </location>
</feature>
<feature type="site" description="Essential for substrate cleavage">
    <location>
        <position position="108"/>
    </location>
</feature>
<feature type="site" description="Alkylation inactivates the enzyme">
    <location>
        <position position="147"/>
    </location>
</feature>
<feature type="site" description="Alkylation inactivates the enzyme; essential for the subsequent hydrolysis of the dihydroxyacetone Schiff base">
    <location>
        <position position="362"/>
    </location>
</feature>
<feature type="site" description="Necessary for preference for fructose 1,6-bisphosphate over fructose 1-phosphate">
    <location>
        <position position="364"/>
    </location>
</feature>
<feature type="modified residue" description="Phosphothreonine" evidence="2">
    <location>
        <position position="9"/>
    </location>
</feature>
<feature type="modified residue" description="Phosphoserine" evidence="2">
    <location>
        <position position="36"/>
    </location>
</feature>
<feature type="modified residue" description="Phosphoserine" evidence="2">
    <location>
        <position position="39"/>
    </location>
</feature>
<feature type="modified residue" description="N6-acetyllysine; alternate" evidence="2">
    <location>
        <position position="42"/>
    </location>
</feature>
<feature type="modified residue" description="Phosphoserine" evidence="2">
    <location>
        <position position="46"/>
    </location>
</feature>
<feature type="modified residue" description="N6-(2-hydroxyisobutyryl)lysine" evidence="2">
    <location>
        <position position="99"/>
    </location>
</feature>
<feature type="modified residue" description="N6-acetyllysine" evidence="2">
    <location>
        <position position="108"/>
    </location>
</feature>
<feature type="modified residue" description="N6-acetyllysine; alternate" evidence="4">
    <location>
        <position position="111"/>
    </location>
</feature>
<feature type="modified residue" description="N6-malonyllysine; alternate" evidence="1">
    <location>
        <position position="111"/>
    </location>
</feature>
<feature type="modified residue" description="Phosphoserine" evidence="3">
    <location>
        <position position="132"/>
    </location>
</feature>
<feature type="modified residue" description="N6-(2-hydroxyisobutyryl)lysine" evidence="2">
    <location>
        <position position="147"/>
    </location>
</feature>
<feature type="modified residue" description="Phosphoserine" evidence="2">
    <location>
        <position position="272"/>
    </location>
</feature>
<feature type="modified residue" description="N6-malonyllysine" evidence="1">
    <location>
        <position position="312"/>
    </location>
</feature>
<feature type="modified residue" description="N6-acetyllysine" evidence="2">
    <location>
        <position position="330"/>
    </location>
</feature>
<feature type="modified residue" description="Deamidated asparagine; in form beta" evidence="15">
    <location>
        <position position="361"/>
    </location>
</feature>
<feature type="cross-link" description="Glycyl lysine isopeptide (Lys-Gly) (interchain with G-Cter in SUMO1); alternate" evidence="2">
    <location>
        <position position="42"/>
    </location>
</feature>
<feature type="cross-link" description="Glycyl lysine isopeptide (Lys-Gly) (interchain with G-Cter in SUMO2); alternate" evidence="2">
    <location>
        <position position="42"/>
    </location>
</feature>
<feature type="mutagenesis site" description="Reduces activity 14-fold." evidence="5">
    <original>E</original>
    <variation>A</variation>
    <location>
        <position position="35"/>
    </location>
</feature>
<feature type="mutagenesis site" description="Reduces activity 14-fold." evidence="5">
    <original>R</original>
    <variation>A</variation>
    <location>
        <position position="43"/>
    </location>
</feature>
<feature type="mutagenesis site" description="Alters protein-protein interactions, leading to a dimeric protein.">
    <original>D</original>
    <variation>V</variation>
    <location>
        <position position="129"/>
    </location>
</feature>
<feature type="mutagenesis site" description="Loss of activity." evidence="5">
    <original>K</original>
    <variation>A</variation>
    <location>
        <position position="147"/>
    </location>
</feature>
<feature type="mutagenesis site" description="Reduces activity over 100-fold." evidence="7">
    <original>E</original>
    <variation>A</variation>
    <location>
        <position position="188"/>
    </location>
</feature>
<feature type="mutagenesis site" description="Reduces activity over 1000-fold." evidence="7">
    <original>E</original>
    <variation>Q</variation>
    <location>
        <position position="188"/>
    </location>
</feature>
<feature type="mutagenesis site" description="Reduces activity 20-fold." evidence="7">
    <original>E</original>
    <variation>Q</variation>
    <location>
        <position position="190"/>
    </location>
</feature>
<feature type="mutagenesis site" description="Loss of activity." evidence="7">
    <original>K</original>
    <variation>M</variation>
    <location>
        <position position="230"/>
    </location>
</feature>
<feature type="mutagenesis site" description="Reduces activity 400-fold." evidence="5">
    <original>R</original>
    <variation>A</variation>
    <location>
        <position position="304"/>
    </location>
</feature>
<feature type="sequence conflict" description="In Ref. 4; AA sequence." evidence="17" ref="4">
    <original>E</original>
    <variation>Q</variation>
    <location>
        <position position="35"/>
    </location>
</feature>
<feature type="sequence conflict" description="In Ref. 6; AA sequence." evidence="17" ref="6">
    <original>GQS</original>
    <variation>SQE</variation>
    <location>
        <begin position="274"/>
        <end position="276"/>
    </location>
</feature>
<feature type="sequence conflict" description="In Ref. 6; AA sequence." evidence="17" ref="6">
    <original>S</original>
    <variation>E</variation>
    <location>
        <position position="276"/>
    </location>
</feature>
<feature type="sequence conflict" description="In Ref. 6; AA sequence." evidence="17" ref="6">
    <original>KPW</original>
    <variation>WPK</variation>
    <location>
        <begin position="294"/>
        <end position="296"/>
    </location>
</feature>
<feature type="sequence conflict" description="In Ref. 7; CAA24246." evidence="17" ref="7">
    <original>S</original>
    <variation>R</variation>
    <location>
        <position position="354"/>
    </location>
</feature>
<feature type="helix" evidence="25">
    <location>
        <begin position="10"/>
        <end position="23"/>
    </location>
</feature>
<feature type="strand" evidence="25">
    <location>
        <begin position="29"/>
        <end position="33"/>
    </location>
</feature>
<feature type="helix" evidence="25">
    <location>
        <begin position="37"/>
        <end position="45"/>
    </location>
</feature>
<feature type="turn" evidence="25">
    <location>
        <begin position="46"/>
        <end position="48"/>
    </location>
</feature>
<feature type="helix" evidence="25">
    <location>
        <begin position="53"/>
        <end position="64"/>
    </location>
</feature>
<feature type="helix" evidence="25">
    <location>
        <begin position="68"/>
        <end position="70"/>
    </location>
</feature>
<feature type="turn" evidence="25">
    <location>
        <begin position="71"/>
        <end position="73"/>
    </location>
</feature>
<feature type="strand" evidence="25">
    <location>
        <begin position="74"/>
        <end position="79"/>
    </location>
</feature>
<feature type="helix" evidence="25">
    <location>
        <begin position="81"/>
        <end position="84"/>
    </location>
</feature>
<feature type="turn" evidence="21">
    <location>
        <begin position="89"/>
        <end position="91"/>
    </location>
</feature>
<feature type="helix" evidence="25">
    <location>
        <begin position="94"/>
        <end position="100"/>
    </location>
</feature>
<feature type="strand" evidence="25">
    <location>
        <begin position="104"/>
        <end position="108"/>
    </location>
</feature>
<feature type="strand" evidence="25">
    <location>
        <begin position="113"/>
        <end position="115"/>
    </location>
</feature>
<feature type="strand" evidence="25">
    <location>
        <begin position="119"/>
        <end position="121"/>
    </location>
</feature>
<feature type="strand" evidence="25">
    <location>
        <begin position="123"/>
        <end position="125"/>
    </location>
</feature>
<feature type="helix" evidence="25">
    <location>
        <begin position="131"/>
        <end position="140"/>
    </location>
</feature>
<feature type="strand" evidence="25">
    <location>
        <begin position="145"/>
        <end position="152"/>
    </location>
</feature>
<feature type="strand" evidence="25">
    <location>
        <begin position="155"/>
        <end position="157"/>
    </location>
</feature>
<feature type="helix" evidence="25">
    <location>
        <begin position="161"/>
        <end position="180"/>
    </location>
</feature>
<feature type="strand" evidence="25">
    <location>
        <begin position="184"/>
        <end position="191"/>
    </location>
</feature>
<feature type="helix" evidence="25">
    <location>
        <begin position="199"/>
        <end position="219"/>
    </location>
</feature>
<feature type="helix" evidence="25">
    <location>
        <begin position="224"/>
        <end position="226"/>
    </location>
</feature>
<feature type="helix" evidence="25">
    <location>
        <begin position="246"/>
        <end position="258"/>
    </location>
</feature>
<feature type="strand" evidence="25">
    <location>
        <begin position="267"/>
        <end position="270"/>
    </location>
</feature>
<feature type="helix" evidence="25">
    <location>
        <begin position="277"/>
        <end position="289"/>
    </location>
</feature>
<feature type="strand" evidence="23">
    <location>
        <begin position="290"/>
        <end position="292"/>
    </location>
</feature>
<feature type="strand" evidence="25">
    <location>
        <begin position="296"/>
        <end position="303"/>
    </location>
</feature>
<feature type="helix" evidence="25">
    <location>
        <begin position="304"/>
        <end position="314"/>
    </location>
</feature>
<feature type="helix" evidence="25">
    <location>
        <begin position="318"/>
        <end position="320"/>
    </location>
</feature>
<feature type="helix" evidence="25">
    <location>
        <begin position="321"/>
        <end position="338"/>
    </location>
</feature>
<feature type="turn" evidence="25">
    <location>
        <begin position="339"/>
        <end position="341"/>
    </location>
</feature>
<feature type="strand" evidence="22">
    <location>
        <begin position="345"/>
        <end position="347"/>
    </location>
</feature>
<feature type="helix" evidence="24">
    <location>
        <begin position="351"/>
        <end position="354"/>
    </location>
</feature>
<feature type="strand" evidence="20">
    <location>
        <begin position="358"/>
        <end position="360"/>
    </location>
</feature>
<feature type="helix" evidence="25">
    <location>
        <begin position="361"/>
        <end position="363"/>
    </location>
</feature>
<reference key="1">
    <citation type="journal article" date="1984" name="J. Biol. Chem.">
        <title>The complete nucleotide sequence for rabbit muscle aldolase A messenger RNA.</title>
        <authorList>
            <person name="Tolan D.R."/>
            <person name="Amsden A.B."/>
            <person name="Putney S.D."/>
            <person name="Urdea M.S."/>
            <person name="Penhoet E.E."/>
        </authorList>
    </citation>
    <scope>NUCLEOTIDE SEQUENCE [MRNA]</scope>
</reference>
<reference key="2">
    <citation type="journal article" date="1974" name="Acta Biochim. Biophys. Acad. Sci. Hung.">
        <title>The amino acid sequence of rabbit muscle aldolase.</title>
        <authorList>
            <person name="Sajgo M."/>
            <person name="Hajos G."/>
        </authorList>
    </citation>
    <scope>PRELIMINARY PROTEIN SEQUENCE OF 2-364</scope>
    <source>
        <tissue>Muscle</tissue>
    </source>
</reference>
<reference key="3">
    <citation type="journal article" date="1974" name="Science">
        <title>Amino acid sequence of rabbit muscle aldolase and the structure of the active center.</title>
        <authorList>
            <person name="Lai C.-Y."/>
            <person name="Nakai N."/>
            <person name="Chang D."/>
        </authorList>
    </citation>
    <scope>PROTEIN SEQUENCE OF 2-364</scope>
    <source>
        <tissue>Muscle</tissue>
    </source>
</reference>
<reference key="4">
    <citation type="journal article" date="1975" name="Arch. Biochem. Biophys.">
        <title>Studies on the structure of rabbit muscle aldolase. Ordering of the tryptic peptides; sequence of 164 amino acid residues in the NH2-terminal BrCN peptide.</title>
        <authorList>
            <person name="Nakai N."/>
            <person name="Chang D."/>
            <person name="Lai C.-Y."/>
        </authorList>
    </citation>
    <scope>PROTEIN SEQUENCE OF 2-165</scope>
</reference>
<reference key="5">
    <citation type="journal article" date="1979" name="Biochem. J.">
        <title>Extended amino acid sequences around the active-site lysine residue of class-I fructose 1,6-bisphosphate aldolases from rabbit muscle, sturgeon muscle, trout muscle and ox liver.</title>
        <authorList>
            <person name="Benfield P.A."/>
            <person name="Forcina B.G."/>
            <person name="Gibbons I."/>
            <person name="Perham R.N."/>
        </authorList>
    </citation>
    <scope>PROTEIN SEQUENCE OF 174-201</scope>
    <scope>SEQUENCE REVISION</scope>
</reference>
<reference key="6">
    <citation type="journal article" date="1975" name="Arch. Biochem. Biophys.">
        <title>Studies on the structure of rabbit muscle aldolase. Determination of the primary structure of the COOH-terminal BrCN peptide; the complete sequence of the subunit polypeptide chain.</title>
        <authorList>
            <person name="Lai C.-Y."/>
        </authorList>
    </citation>
    <scope>PROTEIN SEQUENCE OF 252-364</scope>
    <scope>SEQUENCE REVISION</scope>
</reference>
<reference key="7">
    <citation type="journal article" date="1983" name="Nature">
        <title>A new troponin T and cDNA clones for 13 different muscle proteins, found by shotgun sequencing.</title>
        <authorList>
            <person name="Putney S.D."/>
            <person name="Herlihy W.C."/>
            <person name="Schimmel P.R."/>
        </authorList>
    </citation>
    <scope>NUCLEOTIDE SEQUENCE [MRNA] OF 38-56 AND 350-364</scope>
</reference>
<reference key="8">
    <citation type="journal article" date="1974" name="Biochem. Biophys. Res. Commun.">
        <title>Identification of the histidyl residue of rabbit muscle aldolase alkylated by N-bromoacetylethanolamine phosphate.</title>
        <authorList>
            <person name="Hartman F.C."/>
            <person name="Welch M.H."/>
        </authorList>
    </citation>
    <scope>ACTIVE SITE</scope>
    <scope>DEAMIDATION AT ASN-361</scope>
</reference>
<reference key="9">
    <citation type="journal article" date="1976" name="J. Biol. Chem.">
        <title>Affinity labeling of a previously undetected essential lysyl residue in class I fructose bisphosphate aldolase.</title>
        <authorList>
            <person name="Hartman F.C."/>
            <person name="Brown J.P."/>
        </authorList>
    </citation>
    <scope>ACTIVE SITE</scope>
</reference>
<reference key="10">
    <citation type="journal article" date="1979" name="Eur. J. Biochem.">
        <title>Identification of the C-1-phosphate-binding arginine residue of rabbit-muscle aldolase. Isolation of 1,2-cyclohexanedione-labeled peptide by chemisorption chromatography.</title>
        <authorList>
            <person name="Patthy L."/>
            <person name="Varadi A."/>
            <person name="Thesz J."/>
            <person name="Kovacs K."/>
        </authorList>
    </citation>
    <scope>SUBSTRATE-BINDING SITE</scope>
</reference>
<reference key="11">
    <citation type="journal article" date="1990" name="Mol. Biochem. Parasitol.">
        <title>Expression, purification, biochemical characterization and inhibition of recombinant Plasmodium falciparum aldolase.</title>
        <authorList>
            <person name="Doebeli H."/>
            <person name="Trzeciak A."/>
            <person name="Gillessen D."/>
            <person name="Matile H."/>
            <person name="Srivastava I.K."/>
            <person name="Perrin L.H."/>
            <person name="Jakob P.E."/>
            <person name="Certa U."/>
        </authorList>
    </citation>
    <scope>CATALYTIC ACTIVITY</scope>
    <scope>BIOPHYSICOCHEMICAL PROPERTIES</scope>
    <scope>SUBUNIT</scope>
</reference>
<reference key="12">
    <citation type="journal article" date="2005" name="FEBS Lett.">
        <title>The effect of calcium ions on subcellular localization of aldolase-FBPase complex in skeletal muscle.</title>
        <authorList>
            <person name="Mamczur P."/>
            <person name="Rakus D."/>
            <person name="Gizak A."/>
            <person name="Dus D."/>
            <person name="Dzugaj A."/>
        </authorList>
    </citation>
    <scope>INTERACTION WITH FBP2</scope>
    <scope>SUBCELLULAR LOCATION</scope>
</reference>
<reference key="13">
    <citation type="journal article" date="2008" name="Proteins">
        <title>Evolutionary conserved N-terminal region of human muscle fructose 1,6-bisphosphatase regulates its activity and the interaction with aldolase.</title>
        <authorList>
            <person name="Gizak A."/>
            <person name="Maciaszczyk E."/>
            <person name="Dzugaj A."/>
            <person name="Eschrich K."/>
            <person name="Rakus D."/>
        </authorList>
    </citation>
    <scope>INTERACTION WITH FBP2</scope>
</reference>
<reference key="14">
    <citation type="journal article" date="1997" name="Nat. Struct. Biol.">
        <title>Product binding and role of the C-terminal region in class I D-fructose 1,6-bisphosphate aldolase.</title>
        <authorList>
            <person name="Blom N."/>
            <person name="Sygusch J."/>
        </authorList>
    </citation>
    <scope>X-RAY CRYSTALLOGRAPHY (1.9 ANGSTROMS)</scope>
</reference>
<reference key="15">
    <citation type="journal article" date="1999" name="Biochemistry">
        <title>Structure of a fructose-1,6-bis(phosphate) aldolase liganded to its natural substrate in a cleavage-defective mutant at 2.3 A.</title>
        <authorList>
            <person name="Choi K.H."/>
            <person name="Mazurkie A.S."/>
            <person name="Morris A.J."/>
            <person name="Utheza D."/>
            <person name="Tolan D.R."/>
            <person name="Allen K.N."/>
        </authorList>
    </citation>
    <scope>X-RAY CRYSTALLOGRAPHY (2.3 ANGSTROMS) OF 3-345 OF MUTANT ALA-147 IN COMPLEX WITH 1,6-FRUCTOSE DIPHOSPHATE</scope>
    <scope>SUBUNIT</scope>
    <scope>MUTAGENESIS OF GLU-35; ARG-43; LYS-147 AND ARG-304</scope>
</reference>
<reference key="16">
    <citation type="journal article" date="2002" name="J. Biol. Chem.">
        <title>A conserved glutamate residue exhibits multifunctional catalytic roles in D-fructose-1,6-bisphosphate aldolases.</title>
        <authorList>
            <person name="Maurady A."/>
            <person name="Zdanov A."/>
            <person name="de Moissac D."/>
            <person name="Beaudry D."/>
            <person name="Sygusch J."/>
        </authorList>
    </citation>
    <scope>X-RAY CRYSTALLOGRAPHY (2.46 ANGSTROMS)</scope>
    <scope>MUTAGENESIS OF GLU-188; GLU-190 AND LYS-230</scope>
</reference>
<reference key="17">
    <citation type="journal article" date="2007" name="J. Biol. Chem.">
        <title>A hydrophobic pocket in the active site of glycolytic aldolase mediates interactions with Wiskott-Aldrich syndrome protein.</title>
        <authorList>
            <person name="St-Jean M."/>
            <person name="Izard T."/>
            <person name="Sygusch J."/>
        </authorList>
    </citation>
    <scope>X-RAY CRYSTALLOGRAPHY (2.05 ANGSTROMS) IN COMPLEX WITH WAS</scope>
    <scope>FUNCTION</scope>
</reference>
<reference key="18">
    <citation type="journal article" date="2008" name="Acta Crystallogr. D">
        <title>Structure of a rabbit muscle fructose-1,6-bisphosphate aldolase A dimer variant.</title>
        <authorList>
            <person name="Sherawat M."/>
            <person name="Tolan D.R."/>
            <person name="Allen K.N."/>
        </authorList>
    </citation>
    <scope>X-RAY CRYSTALLOGRAPHY (1.70 ANGSTROMS) OF 5-344 OF MUTANT VAL-129</scope>
    <scope>SUBUNIT</scope>
</reference>
<reference key="19">
    <citation type="journal article" date="2010" name="J. Biol. Chem.">
        <title>Mechanism of aldolase control of sorting nexin 9 function in endocytosis.</title>
        <authorList>
            <person name="Rangarajan E.S."/>
            <person name="Park H."/>
            <person name="Fortin E."/>
            <person name="Sygusch J."/>
            <person name="Izard T."/>
        </authorList>
    </citation>
    <scope>X-RAY CRYSTALLOGRAPHY (2.2 ANGSTROMS) IN COMPLEX WITH SNX9</scope>
    <scope>INTERACTION WITH SNX9</scope>
    <scope>SUBUNIT</scope>
    <scope>CATALYTIC ACTIVITY</scope>
</reference>
<protein>
    <recommendedName>
        <fullName>Fructose-bisphosphate aldolase A</fullName>
        <ecNumber evidence="12 13">4.1.2.13</ecNumber>
    </recommendedName>
    <alternativeName>
        <fullName evidence="16">Muscle-type aldolase</fullName>
    </alternativeName>
</protein>
<gene>
    <name type="primary">ALDOA</name>
</gene>
<accession>P00883</accession>
<accession>Q28671</accession>
<dbReference type="EC" id="4.1.2.13" evidence="12 13"/>
<dbReference type="EMBL" id="K02300">
    <property type="protein sequence ID" value="AAA31156.1"/>
    <property type="molecule type" value="mRNA"/>
</dbReference>
<dbReference type="EMBL" id="V00876">
    <property type="protein sequence ID" value="CAA24245.1"/>
    <property type="molecule type" value="mRNA"/>
</dbReference>
<dbReference type="EMBL" id="V00877">
    <property type="protein sequence ID" value="CAA24246.1"/>
    <property type="molecule type" value="mRNA"/>
</dbReference>
<dbReference type="PIR" id="A92444">
    <property type="entry name" value="ADRBA"/>
</dbReference>
<dbReference type="RefSeq" id="NP_001075707.1">
    <property type="nucleotide sequence ID" value="NM_001082238.1"/>
</dbReference>
<dbReference type="RefSeq" id="XP_008256151.1">
    <property type="nucleotide sequence ID" value="XM_008257929.4"/>
</dbReference>
<dbReference type="RefSeq" id="XP_008256152.1">
    <property type="nucleotide sequence ID" value="XM_008257930.4"/>
</dbReference>
<dbReference type="RefSeq" id="XP_017197924.1">
    <property type="nucleotide sequence ID" value="XM_017342435.3"/>
</dbReference>
<dbReference type="RefSeq" id="XP_069919828.1">
    <property type="nucleotide sequence ID" value="XM_070063727.1"/>
</dbReference>
<dbReference type="PDB" id="1ADO">
    <property type="method" value="X-ray"/>
    <property type="resolution" value="1.90 A"/>
    <property type="chains" value="A/B/C/D=2-364"/>
</dbReference>
<dbReference type="PDB" id="1EWD">
    <property type="method" value="X-ray"/>
    <property type="resolution" value="2.46 A"/>
    <property type="chains" value="A/B/C/D=2-364"/>
</dbReference>
<dbReference type="PDB" id="1EWE">
    <property type="method" value="X-ray"/>
    <property type="resolution" value="2.60 A"/>
    <property type="chains" value="A/B/C/D=2-364"/>
</dbReference>
<dbReference type="PDB" id="1EX5">
    <property type="method" value="X-ray"/>
    <property type="resolution" value="2.20 A"/>
    <property type="chains" value="A/B/C/D=2-364"/>
</dbReference>
<dbReference type="PDB" id="1J4E">
    <property type="method" value="X-ray"/>
    <property type="resolution" value="2.65 A"/>
    <property type="chains" value="A/B/C/D=2-364"/>
</dbReference>
<dbReference type="PDB" id="1ZAH">
    <property type="method" value="X-ray"/>
    <property type="resolution" value="1.80 A"/>
    <property type="chains" value="A/B/C/D=2-364"/>
</dbReference>
<dbReference type="PDB" id="1ZAI">
    <property type="method" value="X-ray"/>
    <property type="resolution" value="1.76 A"/>
    <property type="chains" value="A/B/C/D=2-364"/>
</dbReference>
<dbReference type="PDB" id="1ZAJ">
    <property type="method" value="X-ray"/>
    <property type="resolution" value="1.89 A"/>
    <property type="chains" value="A/B/C/D=2-364"/>
</dbReference>
<dbReference type="PDB" id="1ZAL">
    <property type="method" value="X-ray"/>
    <property type="resolution" value="1.89 A"/>
    <property type="chains" value="A/B/C/D=2-364"/>
</dbReference>
<dbReference type="PDB" id="2OT0">
    <property type="method" value="X-ray"/>
    <property type="resolution" value="2.05 A"/>
    <property type="chains" value="A/B/C/D=2-364"/>
</dbReference>
<dbReference type="PDB" id="2OT1">
    <property type="method" value="X-ray"/>
    <property type="resolution" value="2.05 A"/>
    <property type="chains" value="A/B/C/D=2-364"/>
</dbReference>
<dbReference type="PDB" id="2QUT">
    <property type="method" value="X-ray"/>
    <property type="resolution" value="1.88 A"/>
    <property type="chains" value="A/B/C/D=2-364"/>
</dbReference>
<dbReference type="PDB" id="2QUU">
    <property type="method" value="X-ray"/>
    <property type="resolution" value="1.98 A"/>
    <property type="chains" value="A/B/C/D=2-364"/>
</dbReference>
<dbReference type="PDB" id="2QUV">
    <property type="method" value="X-ray"/>
    <property type="resolution" value="2.22 A"/>
    <property type="chains" value="A/B/C/D=2-364"/>
</dbReference>
<dbReference type="PDB" id="3B8D">
    <property type="method" value="X-ray"/>
    <property type="resolution" value="2.00 A"/>
    <property type="chains" value="A/B/C/D=2-364"/>
</dbReference>
<dbReference type="PDB" id="3BV4">
    <property type="method" value="X-ray"/>
    <property type="resolution" value="1.70 A"/>
    <property type="chains" value="A=5-344"/>
</dbReference>
<dbReference type="PDB" id="3DFN">
    <property type="method" value="X-ray"/>
    <property type="resolution" value="1.86 A"/>
    <property type="chains" value="A/B/C/D=2-364"/>
</dbReference>
<dbReference type="PDB" id="3DFO">
    <property type="method" value="X-ray"/>
    <property type="resolution" value="1.94 A"/>
    <property type="chains" value="A/B/C/D=2-364"/>
</dbReference>
<dbReference type="PDB" id="3DFP">
    <property type="method" value="X-ray"/>
    <property type="resolution" value="2.05 A"/>
    <property type="chains" value="A/B/C/D=2-364"/>
</dbReference>
<dbReference type="PDB" id="3DFQ">
    <property type="method" value="X-ray"/>
    <property type="resolution" value="1.82 A"/>
    <property type="chains" value="A/B/C/D=2-364"/>
</dbReference>
<dbReference type="PDB" id="3DFS">
    <property type="method" value="X-ray"/>
    <property type="resolution" value="2.03 A"/>
    <property type="chains" value="A/B/C/D=2-364"/>
</dbReference>
<dbReference type="PDB" id="3DFT">
    <property type="method" value="X-ray"/>
    <property type="resolution" value="1.94 A"/>
    <property type="chains" value="A/B/C/D=2-364"/>
</dbReference>
<dbReference type="PDB" id="3LGE">
    <property type="method" value="X-ray"/>
    <property type="resolution" value="2.20 A"/>
    <property type="chains" value="A/B/C/D=2-364"/>
</dbReference>
<dbReference type="PDB" id="3TU9">
    <property type="method" value="X-ray"/>
    <property type="resolution" value="2.09 A"/>
    <property type="chains" value="A/B/C/D=2-364"/>
</dbReference>
<dbReference type="PDB" id="5F4X">
    <property type="method" value="X-ray"/>
    <property type="resolution" value="1.84 A"/>
    <property type="chains" value="A/B/C/D=2-364"/>
</dbReference>
<dbReference type="PDB" id="5TLE">
    <property type="method" value="X-ray"/>
    <property type="resolution" value="1.58 A"/>
    <property type="chains" value="A/B/C/D=2-364"/>
</dbReference>
<dbReference type="PDB" id="5TLH">
    <property type="method" value="X-ray"/>
    <property type="resolution" value="2.20 A"/>
    <property type="chains" value="A/B/C/D=2-364"/>
</dbReference>
<dbReference type="PDB" id="5TLW">
    <property type="method" value="X-ray"/>
    <property type="resolution" value="2.29 A"/>
    <property type="chains" value="A/B/C/D=2-364"/>
</dbReference>
<dbReference type="PDB" id="5TLZ">
    <property type="method" value="X-ray"/>
    <property type="resolution" value="1.97 A"/>
    <property type="chains" value="A/B/C/D=2-364"/>
</dbReference>
<dbReference type="PDB" id="5VY5">
    <property type="method" value="EM"/>
    <property type="resolution" value="2.60 A"/>
    <property type="chains" value="A/B/C/D=2-364"/>
</dbReference>
<dbReference type="PDB" id="6ALD">
    <property type="method" value="X-ray"/>
    <property type="resolution" value="2.30 A"/>
    <property type="chains" value="A/B/C/D=2-364"/>
</dbReference>
<dbReference type="PDB" id="6MWQ">
    <property type="method" value="EM"/>
    <property type="resolution" value="3.00 A"/>
    <property type="chains" value="A/B/C/D=12-348"/>
</dbReference>
<dbReference type="PDB" id="6V20">
    <property type="method" value="EM"/>
    <property type="resolution" value="2.13 A"/>
    <property type="chains" value="A/B/C/D=3-345"/>
</dbReference>
<dbReference type="PDB" id="7K9L">
    <property type="method" value="EM"/>
    <property type="resolution" value="4.90 A"/>
    <property type="chains" value="A/B/C/D=2-364"/>
</dbReference>
<dbReference type="PDB" id="7K9X">
    <property type="method" value="EM"/>
    <property type="resolution" value="3.80 A"/>
    <property type="chains" value="A/B/C/D=2-364"/>
</dbReference>
<dbReference type="PDB" id="7KA2">
    <property type="method" value="EM"/>
    <property type="resolution" value="3.60 A"/>
    <property type="chains" value="A/B/C/D=2-364"/>
</dbReference>
<dbReference type="PDB" id="7KA3">
    <property type="method" value="EM"/>
    <property type="resolution" value="3.30 A"/>
    <property type="chains" value="A/B/C/D=2-364"/>
</dbReference>
<dbReference type="PDB" id="7KA4">
    <property type="method" value="EM"/>
    <property type="resolution" value="2.80 A"/>
    <property type="chains" value="A/B/C/D=2-364"/>
</dbReference>
<dbReference type="PDB" id="7VDC">
    <property type="method" value="EM"/>
    <property type="resolution" value="3.28 A"/>
    <property type="chains" value="A/B/C/D=1-364"/>
</dbReference>
<dbReference type="PDB" id="8EHG">
    <property type="method" value="EM"/>
    <property type="resolution" value="2.24 A"/>
    <property type="chains" value="A/B/C/D=1-364"/>
</dbReference>
<dbReference type="PDB" id="8EW2">
    <property type="method" value="EM"/>
    <property type="resolution" value="3.10 A"/>
    <property type="chains" value="A/B/C/D=2-364"/>
</dbReference>
<dbReference type="PDB" id="8TWK">
    <property type="method" value="EM"/>
    <property type="resolution" value="2.60 A"/>
    <property type="chains" value="A/B/C/D=2-345"/>
</dbReference>
<dbReference type="PDB" id="8TWL">
    <property type="method" value="EM"/>
    <property type="resolution" value="2.70 A"/>
    <property type="chains" value="A/B/C/D=2-345"/>
</dbReference>
<dbReference type="PDB" id="8TWM">
    <property type="method" value="EM"/>
    <property type="resolution" value="2.60 A"/>
    <property type="chains" value="A/B/C/D=2-345"/>
</dbReference>
<dbReference type="PDBsum" id="1ADO"/>
<dbReference type="PDBsum" id="1EWD"/>
<dbReference type="PDBsum" id="1EWE"/>
<dbReference type="PDBsum" id="1EX5"/>
<dbReference type="PDBsum" id="1J4E"/>
<dbReference type="PDBsum" id="1ZAH"/>
<dbReference type="PDBsum" id="1ZAI"/>
<dbReference type="PDBsum" id="1ZAJ"/>
<dbReference type="PDBsum" id="1ZAL"/>
<dbReference type="PDBsum" id="2OT0"/>
<dbReference type="PDBsum" id="2OT1"/>
<dbReference type="PDBsum" id="2QUT"/>
<dbReference type="PDBsum" id="2QUU"/>
<dbReference type="PDBsum" id="2QUV"/>
<dbReference type="PDBsum" id="3B8D"/>
<dbReference type="PDBsum" id="3BV4"/>
<dbReference type="PDBsum" id="3DFN"/>
<dbReference type="PDBsum" id="3DFO"/>
<dbReference type="PDBsum" id="3DFP"/>
<dbReference type="PDBsum" id="3DFQ"/>
<dbReference type="PDBsum" id="3DFS"/>
<dbReference type="PDBsum" id="3DFT"/>
<dbReference type="PDBsum" id="3LGE"/>
<dbReference type="PDBsum" id="3TU9"/>
<dbReference type="PDBsum" id="5F4X"/>
<dbReference type="PDBsum" id="5TLE"/>
<dbReference type="PDBsum" id="5TLH"/>
<dbReference type="PDBsum" id="5TLW"/>
<dbReference type="PDBsum" id="5TLZ"/>
<dbReference type="PDBsum" id="5VY5"/>
<dbReference type="PDBsum" id="6ALD"/>
<dbReference type="PDBsum" id="6MWQ"/>
<dbReference type="PDBsum" id="6V20"/>
<dbReference type="PDBsum" id="7K9L"/>
<dbReference type="PDBsum" id="7K9X"/>
<dbReference type="PDBsum" id="7KA2"/>
<dbReference type="PDBsum" id="7KA3"/>
<dbReference type="PDBsum" id="7KA4"/>
<dbReference type="PDBsum" id="7VDC"/>
<dbReference type="PDBsum" id="8EHG"/>
<dbReference type="PDBsum" id="8EW2"/>
<dbReference type="PDBsum" id="8TWK"/>
<dbReference type="PDBsum" id="8TWL"/>
<dbReference type="PDBsum" id="8TWM"/>
<dbReference type="EMDB" id="EMD-21023"/>
<dbReference type="EMDB" id="EMD-22754"/>
<dbReference type="EMDB" id="EMD-22755"/>
<dbReference type="EMDB" id="EMD-22756"/>
<dbReference type="EMDB" id="EMD-22757"/>
<dbReference type="EMDB" id="EMD-22758"/>
<dbReference type="EMDB" id="EMD-24798"/>
<dbReference type="EMDB" id="EMD-24799"/>
<dbReference type="EMDB" id="EMD-28147"/>
<dbReference type="EMDB" id="EMD-28640"/>
<dbReference type="EMDB" id="EMD-31913"/>
<dbReference type="EMDB" id="EMD-41669"/>
<dbReference type="EMDB" id="EMD-41670"/>
<dbReference type="EMDB" id="EMD-41671"/>
<dbReference type="EMDB" id="EMD-43528"/>
<dbReference type="EMDB" id="EMD-7541"/>
<dbReference type="EMDB" id="EMD-7550"/>
<dbReference type="EMDB" id="EMD-7551"/>
<dbReference type="EMDB" id="EMD-7562"/>
<dbReference type="EMDB" id="EMD-7614"/>
<dbReference type="EMDB" id="EMD-7615"/>
<dbReference type="EMDB" id="EMD-7616"/>
<dbReference type="EMDB" id="EMD-7617"/>
<dbReference type="EMDB" id="EMD-8743"/>
<dbReference type="EMDB" id="EMD-9277"/>
<dbReference type="PCDDB" id="P00883"/>
<dbReference type="SASBDB" id="P00883"/>
<dbReference type="SMR" id="P00883"/>
<dbReference type="BioGRID" id="1172078">
    <property type="interactions" value="2"/>
</dbReference>
<dbReference type="FunCoup" id="P00883">
    <property type="interactions" value="377"/>
</dbReference>
<dbReference type="IntAct" id="P00883">
    <property type="interactions" value="1"/>
</dbReference>
<dbReference type="MINT" id="P00883"/>
<dbReference type="STRING" id="9986.ENSOCUP00000041095"/>
<dbReference type="BindingDB" id="P00883"/>
<dbReference type="ChEMBL" id="CHEMBL4695"/>
<dbReference type="MoonProt" id="P00883"/>
<dbReference type="iPTMnet" id="P00883"/>
<dbReference type="MetOSite" id="P00883"/>
<dbReference type="PaxDb" id="9986-ENSOCUP00000008499"/>
<dbReference type="PRIDE" id="P00883"/>
<dbReference type="Ensembl" id="ENSOCUT00000009869.2">
    <property type="protein sequence ID" value="ENSOCUP00000008499.2"/>
    <property type="gene ID" value="ENSOCUG00000006329.4"/>
</dbReference>
<dbReference type="GeneID" id="100009055"/>
<dbReference type="KEGG" id="ocu:100009055"/>
<dbReference type="CTD" id="226"/>
<dbReference type="eggNOG" id="KOG1557">
    <property type="taxonomic scope" value="Eukaryota"/>
</dbReference>
<dbReference type="GeneTree" id="ENSGT00950000182987"/>
<dbReference type="HOGENOM" id="CLU_031243_1_0_1"/>
<dbReference type="InParanoid" id="P00883"/>
<dbReference type="OMA" id="WRAVITI"/>
<dbReference type="OrthoDB" id="36455at2759"/>
<dbReference type="BRENDA" id="4.1.2.13">
    <property type="organism ID" value="1749"/>
</dbReference>
<dbReference type="SABIO-RK" id="P00883"/>
<dbReference type="UniPathway" id="UPA00109">
    <property type="reaction ID" value="UER00183"/>
</dbReference>
<dbReference type="EvolutionaryTrace" id="P00883"/>
<dbReference type="PRO" id="PR:P00883"/>
<dbReference type="Proteomes" id="UP000001811">
    <property type="component" value="Chromosome 6"/>
</dbReference>
<dbReference type="Bgee" id="ENSOCUG00000006329">
    <property type="expression patterns" value="Expressed in skeletal muscle tissue and 18 other cell types or tissues"/>
</dbReference>
<dbReference type="GO" id="GO:0031674">
    <property type="term" value="C:I band"/>
    <property type="evidence" value="ECO:0007669"/>
    <property type="project" value="UniProtKB-SubCell"/>
</dbReference>
<dbReference type="GO" id="GO:0031430">
    <property type="term" value="C:M band"/>
    <property type="evidence" value="ECO:0007669"/>
    <property type="project" value="UniProtKB-SubCell"/>
</dbReference>
<dbReference type="GO" id="GO:0004332">
    <property type="term" value="F:fructose-bisphosphate aldolase activity"/>
    <property type="evidence" value="ECO:0000314"/>
    <property type="project" value="UniProtKB"/>
</dbReference>
<dbReference type="GO" id="GO:0006096">
    <property type="term" value="P:glycolytic process"/>
    <property type="evidence" value="ECO:0000314"/>
    <property type="project" value="UniProtKB"/>
</dbReference>
<dbReference type="GO" id="GO:0034316">
    <property type="term" value="P:negative regulation of Arp2/3 complex-mediated actin nucleation"/>
    <property type="evidence" value="ECO:0000315"/>
    <property type="project" value="CAFA"/>
</dbReference>
<dbReference type="GO" id="GO:0030335">
    <property type="term" value="P:positive regulation of cell migration"/>
    <property type="evidence" value="ECO:0000314"/>
    <property type="project" value="CAFA"/>
</dbReference>
<dbReference type="GO" id="GO:0051289">
    <property type="term" value="P:protein homotetramerization"/>
    <property type="evidence" value="ECO:0000353"/>
    <property type="project" value="UniProtKB"/>
</dbReference>
<dbReference type="CDD" id="cd00948">
    <property type="entry name" value="FBP_aldolase_I_a"/>
    <property type="match status" value="1"/>
</dbReference>
<dbReference type="FunFam" id="3.20.20.70:FF:000021">
    <property type="entry name" value="Fructose-bisphosphate aldolase"/>
    <property type="match status" value="1"/>
</dbReference>
<dbReference type="Gene3D" id="3.20.20.70">
    <property type="entry name" value="Aldolase class I"/>
    <property type="match status" value="1"/>
</dbReference>
<dbReference type="InterPro" id="IPR029768">
    <property type="entry name" value="Aldolase_I_AS"/>
</dbReference>
<dbReference type="InterPro" id="IPR013785">
    <property type="entry name" value="Aldolase_TIM"/>
</dbReference>
<dbReference type="InterPro" id="IPR000741">
    <property type="entry name" value="FBA_I"/>
</dbReference>
<dbReference type="NCBIfam" id="NF033379">
    <property type="entry name" value="FrucBisAld_I"/>
    <property type="match status" value="1"/>
</dbReference>
<dbReference type="PANTHER" id="PTHR11627">
    <property type="entry name" value="FRUCTOSE-BISPHOSPHATE ALDOLASE"/>
    <property type="match status" value="1"/>
</dbReference>
<dbReference type="Pfam" id="PF00274">
    <property type="entry name" value="Glycolytic"/>
    <property type="match status" value="1"/>
</dbReference>
<dbReference type="SUPFAM" id="SSF51569">
    <property type="entry name" value="Aldolase"/>
    <property type="match status" value="1"/>
</dbReference>
<dbReference type="PROSITE" id="PS00158">
    <property type="entry name" value="ALDOLASE_CLASS_I"/>
    <property type="match status" value="1"/>
</dbReference>
<sequence>MPHSHPALTPEQKKELSDIAHRIVAPGKGILAADESTGSIAKRLQSIGTENTEENRRFYRQLLLTADDRVNPCIGGVILFHETLYQKADDGRPFPQVIKSKGGVVGIKVDKGVVPLAGTNGETTTQGLDGLSERCAQYKKDGADFAKWRCVLKIGEHTPSALAIMENANVLARYASICQQNGIVPIVEPEILPDGDHDLKRCQYVTEKVLAAVYKALSDHHIYLEGTLLKPNMVTPGHACTQKYSHEEIAMATVTALRRTVPPAVTGVTFLSGGQSEEEASINLNAINKCPLLKPWALTFSYGRALQASALKAWGGKKENLKAAQEEYVKRALANSLACQGKYTPSGQAGAAASESLFISNHAY</sequence>
<name>ALDOA_RABIT</name>
<keyword id="KW-0002">3D-structure</keyword>
<keyword id="KW-0007">Acetylation</keyword>
<keyword id="KW-0963">Cytoplasm</keyword>
<keyword id="KW-0903">Direct protein sequencing</keyword>
<keyword id="KW-0324">Glycolysis</keyword>
<keyword id="KW-0379">Hydroxylation</keyword>
<keyword id="KW-1017">Isopeptide bond</keyword>
<keyword id="KW-0456">Lyase</keyword>
<keyword id="KW-0597">Phosphoprotein</keyword>
<keyword id="KW-1185">Reference proteome</keyword>
<keyword id="KW-0704">Schiff base</keyword>
<keyword id="KW-0832">Ubl conjugation</keyword>